<protein>
    <recommendedName>
        <fullName evidence="1">Aspartyl/glutamyl-tRNA(Asn/Gln) amidotransferase subunit B</fullName>
        <shortName evidence="1">Asp/Glu-ADT subunit B</shortName>
        <ecNumber evidence="1">6.3.5.-</ecNumber>
    </recommendedName>
</protein>
<proteinExistence type="inferred from homology"/>
<organism>
    <name type="scientific">Pseudomonas fluorescens (strain SBW25)</name>
    <dbReference type="NCBI Taxonomy" id="216595"/>
    <lineage>
        <taxon>Bacteria</taxon>
        <taxon>Pseudomonadati</taxon>
        <taxon>Pseudomonadota</taxon>
        <taxon>Gammaproteobacteria</taxon>
        <taxon>Pseudomonadales</taxon>
        <taxon>Pseudomonadaceae</taxon>
        <taxon>Pseudomonas</taxon>
    </lineage>
</organism>
<dbReference type="EC" id="6.3.5.-" evidence="1"/>
<dbReference type="EMBL" id="AM181176">
    <property type="protein sequence ID" value="CAY47127.1"/>
    <property type="molecule type" value="Genomic_DNA"/>
</dbReference>
<dbReference type="RefSeq" id="WP_012722221.1">
    <property type="nucleotide sequence ID" value="NC_012660.1"/>
</dbReference>
<dbReference type="SMR" id="C3K6Y3"/>
<dbReference type="STRING" id="294.SRM1_00882"/>
<dbReference type="PATRIC" id="fig|216595.4.peg.1096"/>
<dbReference type="eggNOG" id="COG0064">
    <property type="taxonomic scope" value="Bacteria"/>
</dbReference>
<dbReference type="HOGENOM" id="CLU_019240_0_0_6"/>
<dbReference type="OrthoDB" id="9804078at2"/>
<dbReference type="GO" id="GO:0050566">
    <property type="term" value="F:asparaginyl-tRNA synthase (glutamine-hydrolyzing) activity"/>
    <property type="evidence" value="ECO:0007669"/>
    <property type="project" value="RHEA"/>
</dbReference>
<dbReference type="GO" id="GO:0005524">
    <property type="term" value="F:ATP binding"/>
    <property type="evidence" value="ECO:0007669"/>
    <property type="project" value="UniProtKB-KW"/>
</dbReference>
<dbReference type="GO" id="GO:0050567">
    <property type="term" value="F:glutaminyl-tRNA synthase (glutamine-hydrolyzing) activity"/>
    <property type="evidence" value="ECO:0007669"/>
    <property type="project" value="UniProtKB-UniRule"/>
</dbReference>
<dbReference type="GO" id="GO:0070681">
    <property type="term" value="P:glutaminyl-tRNAGln biosynthesis via transamidation"/>
    <property type="evidence" value="ECO:0007669"/>
    <property type="project" value="TreeGrafter"/>
</dbReference>
<dbReference type="GO" id="GO:0006412">
    <property type="term" value="P:translation"/>
    <property type="evidence" value="ECO:0007669"/>
    <property type="project" value="UniProtKB-UniRule"/>
</dbReference>
<dbReference type="FunFam" id="1.10.10.410:FF:000001">
    <property type="entry name" value="Aspartyl/glutamyl-tRNA(Asn/Gln) amidotransferase subunit B"/>
    <property type="match status" value="1"/>
</dbReference>
<dbReference type="FunFam" id="1.10.150.380:FF:000001">
    <property type="entry name" value="Aspartyl/glutamyl-tRNA(Asn/Gln) amidotransferase subunit B"/>
    <property type="match status" value="1"/>
</dbReference>
<dbReference type="Gene3D" id="1.10.10.410">
    <property type="match status" value="1"/>
</dbReference>
<dbReference type="Gene3D" id="1.10.150.380">
    <property type="entry name" value="GatB domain, N-terminal subdomain"/>
    <property type="match status" value="1"/>
</dbReference>
<dbReference type="HAMAP" id="MF_00121">
    <property type="entry name" value="GatB"/>
    <property type="match status" value="1"/>
</dbReference>
<dbReference type="InterPro" id="IPR017959">
    <property type="entry name" value="Asn/Gln-tRNA_amidoTrfase_suB/E"/>
</dbReference>
<dbReference type="InterPro" id="IPR006075">
    <property type="entry name" value="Asn/Gln-tRNA_Trfase_suB/E_cat"/>
</dbReference>
<dbReference type="InterPro" id="IPR018027">
    <property type="entry name" value="Asn/Gln_amidotransferase"/>
</dbReference>
<dbReference type="InterPro" id="IPR003789">
    <property type="entry name" value="Asn/Gln_tRNA_amidoTrase-B-like"/>
</dbReference>
<dbReference type="InterPro" id="IPR004413">
    <property type="entry name" value="GatB"/>
</dbReference>
<dbReference type="InterPro" id="IPR042114">
    <property type="entry name" value="GatB_C_1"/>
</dbReference>
<dbReference type="InterPro" id="IPR023168">
    <property type="entry name" value="GatB_Yqey_C_2"/>
</dbReference>
<dbReference type="InterPro" id="IPR017958">
    <property type="entry name" value="Gln-tRNA_amidoTrfase_suB_CS"/>
</dbReference>
<dbReference type="InterPro" id="IPR014746">
    <property type="entry name" value="Gln_synth/guanido_kin_cat_dom"/>
</dbReference>
<dbReference type="NCBIfam" id="TIGR00133">
    <property type="entry name" value="gatB"/>
    <property type="match status" value="1"/>
</dbReference>
<dbReference type="NCBIfam" id="NF004012">
    <property type="entry name" value="PRK05477.1-2"/>
    <property type="match status" value="1"/>
</dbReference>
<dbReference type="NCBIfam" id="NF004014">
    <property type="entry name" value="PRK05477.1-4"/>
    <property type="match status" value="1"/>
</dbReference>
<dbReference type="NCBIfam" id="NF004015">
    <property type="entry name" value="PRK05477.1-5"/>
    <property type="match status" value="1"/>
</dbReference>
<dbReference type="PANTHER" id="PTHR11659">
    <property type="entry name" value="GLUTAMYL-TRNA GLN AMIDOTRANSFERASE SUBUNIT B MITOCHONDRIAL AND PROKARYOTIC PET112-RELATED"/>
    <property type="match status" value="1"/>
</dbReference>
<dbReference type="PANTHER" id="PTHR11659:SF0">
    <property type="entry name" value="GLUTAMYL-TRNA(GLN) AMIDOTRANSFERASE SUBUNIT B, MITOCHONDRIAL"/>
    <property type="match status" value="1"/>
</dbReference>
<dbReference type="Pfam" id="PF02934">
    <property type="entry name" value="GatB_N"/>
    <property type="match status" value="1"/>
</dbReference>
<dbReference type="Pfam" id="PF02637">
    <property type="entry name" value="GatB_Yqey"/>
    <property type="match status" value="1"/>
</dbReference>
<dbReference type="SMART" id="SM00845">
    <property type="entry name" value="GatB_Yqey"/>
    <property type="match status" value="1"/>
</dbReference>
<dbReference type="SUPFAM" id="SSF89095">
    <property type="entry name" value="GatB/YqeY motif"/>
    <property type="match status" value="1"/>
</dbReference>
<dbReference type="SUPFAM" id="SSF55931">
    <property type="entry name" value="Glutamine synthetase/guanido kinase"/>
    <property type="match status" value="1"/>
</dbReference>
<dbReference type="PROSITE" id="PS01234">
    <property type="entry name" value="GATB"/>
    <property type="match status" value="1"/>
</dbReference>
<gene>
    <name evidence="1" type="primary">gatB</name>
    <name type="ordered locus">PFLU_0860</name>
</gene>
<comment type="function">
    <text evidence="1">Allows the formation of correctly charged Asn-tRNA(Asn) or Gln-tRNA(Gln) through the transamidation of misacylated Asp-tRNA(Asn) or Glu-tRNA(Gln) in organisms which lack either or both of asparaginyl-tRNA or glutaminyl-tRNA synthetases. The reaction takes place in the presence of glutamine and ATP through an activated phospho-Asp-tRNA(Asn) or phospho-Glu-tRNA(Gln).</text>
</comment>
<comment type="catalytic activity">
    <reaction evidence="1">
        <text>L-glutamyl-tRNA(Gln) + L-glutamine + ATP + H2O = L-glutaminyl-tRNA(Gln) + L-glutamate + ADP + phosphate + H(+)</text>
        <dbReference type="Rhea" id="RHEA:17521"/>
        <dbReference type="Rhea" id="RHEA-COMP:9681"/>
        <dbReference type="Rhea" id="RHEA-COMP:9684"/>
        <dbReference type="ChEBI" id="CHEBI:15377"/>
        <dbReference type="ChEBI" id="CHEBI:15378"/>
        <dbReference type="ChEBI" id="CHEBI:29985"/>
        <dbReference type="ChEBI" id="CHEBI:30616"/>
        <dbReference type="ChEBI" id="CHEBI:43474"/>
        <dbReference type="ChEBI" id="CHEBI:58359"/>
        <dbReference type="ChEBI" id="CHEBI:78520"/>
        <dbReference type="ChEBI" id="CHEBI:78521"/>
        <dbReference type="ChEBI" id="CHEBI:456216"/>
    </reaction>
</comment>
<comment type="catalytic activity">
    <reaction evidence="1">
        <text>L-aspartyl-tRNA(Asn) + L-glutamine + ATP + H2O = L-asparaginyl-tRNA(Asn) + L-glutamate + ADP + phosphate + 2 H(+)</text>
        <dbReference type="Rhea" id="RHEA:14513"/>
        <dbReference type="Rhea" id="RHEA-COMP:9674"/>
        <dbReference type="Rhea" id="RHEA-COMP:9677"/>
        <dbReference type="ChEBI" id="CHEBI:15377"/>
        <dbReference type="ChEBI" id="CHEBI:15378"/>
        <dbReference type="ChEBI" id="CHEBI:29985"/>
        <dbReference type="ChEBI" id="CHEBI:30616"/>
        <dbReference type="ChEBI" id="CHEBI:43474"/>
        <dbReference type="ChEBI" id="CHEBI:58359"/>
        <dbReference type="ChEBI" id="CHEBI:78515"/>
        <dbReference type="ChEBI" id="CHEBI:78516"/>
        <dbReference type="ChEBI" id="CHEBI:456216"/>
    </reaction>
</comment>
<comment type="subunit">
    <text evidence="1">Heterotrimer of A, B and C subunits.</text>
</comment>
<comment type="similarity">
    <text evidence="1">Belongs to the GatB/GatE family. GatB subfamily.</text>
</comment>
<accession>C3K6Y3</accession>
<keyword id="KW-0067">ATP-binding</keyword>
<keyword id="KW-0436">Ligase</keyword>
<keyword id="KW-0547">Nucleotide-binding</keyword>
<keyword id="KW-0648">Protein biosynthesis</keyword>
<feature type="chain" id="PRO_1000203056" description="Aspartyl/glutamyl-tRNA(Asn/Gln) amidotransferase subunit B">
    <location>
        <begin position="1"/>
        <end position="481"/>
    </location>
</feature>
<name>GATB_PSEFS</name>
<reference key="1">
    <citation type="journal article" date="2009" name="Genome Biol.">
        <title>Genomic and genetic analyses of diversity and plant interactions of Pseudomonas fluorescens.</title>
        <authorList>
            <person name="Silby M.W."/>
            <person name="Cerdeno-Tarraga A.M."/>
            <person name="Vernikos G.S."/>
            <person name="Giddens S.R."/>
            <person name="Jackson R.W."/>
            <person name="Preston G.M."/>
            <person name="Zhang X.-X."/>
            <person name="Moon C.D."/>
            <person name="Gehrig S.M."/>
            <person name="Godfrey S.A.C."/>
            <person name="Knight C.G."/>
            <person name="Malone J.G."/>
            <person name="Robinson Z."/>
            <person name="Spiers A.J."/>
            <person name="Harris S."/>
            <person name="Challis G.L."/>
            <person name="Yaxley A.M."/>
            <person name="Harris D."/>
            <person name="Seeger K."/>
            <person name="Murphy L."/>
            <person name="Rutter S."/>
            <person name="Squares R."/>
            <person name="Quail M.A."/>
            <person name="Saunders E."/>
            <person name="Mavromatis K."/>
            <person name="Brettin T.S."/>
            <person name="Bentley S.D."/>
            <person name="Hothersall J."/>
            <person name="Stephens E."/>
            <person name="Thomas C.M."/>
            <person name="Parkhill J."/>
            <person name="Levy S.B."/>
            <person name="Rainey P.B."/>
            <person name="Thomson N.R."/>
        </authorList>
    </citation>
    <scope>NUCLEOTIDE SEQUENCE [LARGE SCALE GENOMIC DNA]</scope>
    <source>
        <strain>SBW25</strain>
    </source>
</reference>
<sequence>MQWEVVIGLEIHTQLATQSKIFSGSATTFGSEPNTQASLVDLGMPGVLPVLNQEAVRMAVMFGLAIDAEIGQHNVFARKNYFYPDLPKGYQISQMELPIVGKGYLDIPLEDGTIKRVGVTRAHLEEDAGKSLHEEFNGATGIDLNRAGTPLLEIVSEPDMRSAKEAVAYVKTIHALVRYLGICDGNMAEGSLRCDCNVSVRPKGQAEYGTRCEIKNVNSFRFIEKAINTEVRRQIELIEDGGKVIQQTRLYDPNKDETRAMRSKEEANDYRYFPDPDLLPVVIEDSFLNDIRATLPELPPQKRERFQAQFGLSVYDASVLASSREQADYFEKVVSIAGDAKLAANWVMVELGSLLNKQGLEIDEAPVTAEQLGGMLLRIKDNTISGKIAKTVFEAMASGEGSADEIIEKRGLKQVTDSGAISAVLDEMLAANAEQVKQYRAADEAKRGKMFGFFVGQAMKASKGKANPQQVNELLKSKLEG</sequence>
<evidence type="ECO:0000255" key="1">
    <source>
        <dbReference type="HAMAP-Rule" id="MF_00121"/>
    </source>
</evidence>